<comment type="miscellaneous">
    <text>This protein is part of the e14 prophage present on the genomes of E.coli K12 MG1655 and W3110.</text>
</comment>
<sequence length="66" mass="7402">MKAYWDSLTKEQQGELAGKVGSTPGYLRLVFNGYKKASFVLAKKLEQYTSGAITKSDLRPDIYPKD</sequence>
<organism>
    <name type="scientific">Escherichia coli (strain K12)</name>
    <dbReference type="NCBI Taxonomy" id="83333"/>
    <lineage>
        <taxon>Bacteria</taxon>
        <taxon>Pseudomonadati</taxon>
        <taxon>Pseudomonadota</taxon>
        <taxon>Gammaproteobacteria</taxon>
        <taxon>Enterobacterales</taxon>
        <taxon>Enterobacteriaceae</taxon>
        <taxon>Escherichia</taxon>
    </lineage>
</organism>
<gene>
    <name type="primary">croE</name>
    <name type="synonym">ymfT</name>
    <name type="ordered locus">b1146</name>
    <name type="ordered locus">JW5169</name>
</gene>
<protein>
    <recommendedName>
        <fullName evidence="1">Prophage transcriptional regulatory protein</fullName>
    </recommendedName>
    <alternativeName>
        <fullName>Putative lambdoid prophage e14 transcriptional regulatory protein</fullName>
    </alternativeName>
</protein>
<reference key="1">
    <citation type="journal article" date="1997" name="Science">
        <title>The complete genome sequence of Escherichia coli K-12.</title>
        <authorList>
            <person name="Blattner F.R."/>
            <person name="Plunkett G. III"/>
            <person name="Bloch C.A."/>
            <person name="Perna N.T."/>
            <person name="Burland V."/>
            <person name="Riley M."/>
            <person name="Collado-Vides J."/>
            <person name="Glasner J.D."/>
            <person name="Rode C.K."/>
            <person name="Mayhew G.F."/>
            <person name="Gregor J."/>
            <person name="Davis N.W."/>
            <person name="Kirkpatrick H.A."/>
            <person name="Goeden M.A."/>
            <person name="Rose D.J."/>
            <person name="Mau B."/>
            <person name="Shao Y."/>
        </authorList>
    </citation>
    <scope>NUCLEOTIDE SEQUENCE [LARGE SCALE GENOMIC DNA]</scope>
    <source>
        <strain>K12 / MG1655 / ATCC 47076</strain>
    </source>
</reference>
<reference key="2">
    <citation type="journal article" date="2006" name="Mol. Syst. Biol.">
        <title>Highly accurate genome sequences of Escherichia coli K-12 strains MG1655 and W3110.</title>
        <authorList>
            <person name="Hayashi K."/>
            <person name="Morooka N."/>
            <person name="Yamamoto Y."/>
            <person name="Fujita K."/>
            <person name="Isono K."/>
            <person name="Choi S."/>
            <person name="Ohtsubo E."/>
            <person name="Baba T."/>
            <person name="Wanner B.L."/>
            <person name="Mori H."/>
            <person name="Horiuchi T."/>
        </authorList>
    </citation>
    <scope>NUCLEOTIDE SEQUENCE [LARGE SCALE GENOMIC DNA]</scope>
    <source>
        <strain>K12 / W3110 / ATCC 27325 / DSM 5911</strain>
    </source>
</reference>
<name>CROE_ECOLI</name>
<dbReference type="EMBL" id="U00096">
    <property type="protein sequence ID" value="AAC74230.2"/>
    <property type="molecule type" value="Genomic_DNA"/>
</dbReference>
<dbReference type="EMBL" id="AP009048">
    <property type="protein sequence ID" value="BAA35972.2"/>
    <property type="molecule type" value="Genomic_DNA"/>
</dbReference>
<dbReference type="PIR" id="G64859">
    <property type="entry name" value="G64859"/>
</dbReference>
<dbReference type="RefSeq" id="NP_415664.2">
    <property type="nucleotide sequence ID" value="NC_000913.3"/>
</dbReference>
<dbReference type="RefSeq" id="WP_000649480.1">
    <property type="nucleotide sequence ID" value="NZ_CP064683.1"/>
</dbReference>
<dbReference type="SMR" id="P75975"/>
<dbReference type="BioGRID" id="4262850">
    <property type="interactions" value="18"/>
</dbReference>
<dbReference type="FunCoup" id="P75975">
    <property type="interactions" value="21"/>
</dbReference>
<dbReference type="STRING" id="511145.b1146"/>
<dbReference type="PaxDb" id="511145-b1146"/>
<dbReference type="EnsemblBacteria" id="AAC74230">
    <property type="protein sequence ID" value="AAC74230"/>
    <property type="gene ID" value="b1146"/>
</dbReference>
<dbReference type="GeneID" id="945720"/>
<dbReference type="KEGG" id="ecj:JW5169"/>
<dbReference type="KEGG" id="eco:b1146"/>
<dbReference type="PATRIC" id="fig|511145.12.peg.1188"/>
<dbReference type="eggNOG" id="COG4197">
    <property type="taxonomic scope" value="Bacteria"/>
</dbReference>
<dbReference type="HOGENOM" id="CLU_173998_3_4_6"/>
<dbReference type="InParanoid" id="P75975"/>
<dbReference type="OMA" id="YREGSFQ"/>
<dbReference type="BioCyc" id="EcoCyc:G6590-MONOMER"/>
<dbReference type="PRO" id="PR:P75975"/>
<dbReference type="Proteomes" id="UP000000625">
    <property type="component" value="Chromosome"/>
</dbReference>
<dbReference type="GO" id="GO:0003677">
    <property type="term" value="F:DNA binding"/>
    <property type="evidence" value="ECO:0007669"/>
    <property type="project" value="InterPro"/>
</dbReference>
<dbReference type="Gene3D" id="1.10.260.40">
    <property type="entry name" value="lambda repressor-like DNA-binding domains"/>
    <property type="match status" value="1"/>
</dbReference>
<dbReference type="InterPro" id="IPR010982">
    <property type="entry name" value="Lambda_DNA-bd_dom_sf"/>
</dbReference>
<feature type="chain" id="PRO_0000272025" description="Prophage transcriptional regulatory protein">
    <location>
        <begin position="1"/>
        <end position="66"/>
    </location>
</feature>
<proteinExistence type="predicted"/>
<accession>P75975</accession>
<accession>Q79EM1</accession>
<keyword id="KW-1185">Reference proteome</keyword>
<evidence type="ECO:0000305" key="1"/>